<gene>
    <name type="primary">47</name>
</gene>
<feature type="chain" id="PRO_0000164935" description="Exonuclease subunit 1">
    <location>
        <begin position="1"/>
        <end position="339"/>
    </location>
</feature>
<comment type="function">
    <text evidence="1 2 3">Exonuclease that plays a role in viral genome replication, DNA recombination, and host DNA degradation.</text>
</comment>
<comment type="subunit">
    <text>Consists of two subunits: gp46 and gp47.</text>
</comment>
<comment type="similarity">
    <text evidence="4">To phage T5 protein D12 and to yeast RAD52.</text>
</comment>
<evidence type="ECO:0000269" key="1">
    <source>
    </source>
</evidence>
<evidence type="ECO:0000269" key="2">
    <source>
    </source>
</evidence>
<evidence type="ECO:0000269" key="3">
    <source>
    </source>
</evidence>
<evidence type="ECO:0000305" key="4"/>
<protein>
    <recommendedName>
        <fullName>Exonuclease subunit 1</fullName>
        <ecNumber>3.1.11.-</ecNumber>
    </recommendedName>
    <alternativeName>
        <fullName>Gene product 47</fullName>
        <shortName>gp47</shortName>
    </alternativeName>
</protein>
<dbReference type="EC" id="3.1.11.-"/>
<dbReference type="EMBL" id="X01804">
    <property type="protein sequence ID" value="CAA25942.1"/>
    <property type="molecule type" value="Genomic_DNA"/>
</dbReference>
<dbReference type="EMBL" id="M10160">
    <property type="protein sequence ID" value="AAC05391.1"/>
    <property type="molecule type" value="Genomic_DNA"/>
</dbReference>
<dbReference type="EMBL" id="AF158101">
    <property type="protein sequence ID" value="AAD42475.1"/>
    <property type="molecule type" value="Genomic_DNA"/>
</dbReference>
<dbReference type="PIR" id="A04297">
    <property type="entry name" value="NCBPX4"/>
</dbReference>
<dbReference type="RefSeq" id="NP_049672.1">
    <property type="nucleotide sequence ID" value="NC_000866.4"/>
</dbReference>
<dbReference type="SMR" id="P04521"/>
<dbReference type="GeneID" id="1258781"/>
<dbReference type="KEGG" id="vg:1258781"/>
<dbReference type="OrthoDB" id="3083at10239"/>
<dbReference type="Proteomes" id="UP000009087">
    <property type="component" value="Segment"/>
</dbReference>
<dbReference type="GO" id="GO:0003677">
    <property type="term" value="F:DNA binding"/>
    <property type="evidence" value="ECO:0007669"/>
    <property type="project" value="UniProtKB-KW"/>
</dbReference>
<dbReference type="GO" id="GO:0004527">
    <property type="term" value="F:exonuclease activity"/>
    <property type="evidence" value="ECO:0007669"/>
    <property type="project" value="UniProtKB-KW"/>
</dbReference>
<dbReference type="GO" id="GO:0099015">
    <property type="term" value="P:degradation of host chromosome by virus"/>
    <property type="evidence" value="ECO:0007669"/>
    <property type="project" value="UniProtKB-KW"/>
</dbReference>
<dbReference type="GO" id="GO:0006281">
    <property type="term" value="P:DNA repair"/>
    <property type="evidence" value="ECO:0007669"/>
    <property type="project" value="UniProtKB-KW"/>
</dbReference>
<dbReference type="GO" id="GO:0039657">
    <property type="term" value="P:symbiont-mediated suppression of host gene expression"/>
    <property type="evidence" value="ECO:0007669"/>
    <property type="project" value="UniProtKB-KW"/>
</dbReference>
<dbReference type="Gene3D" id="3.60.21.10">
    <property type="match status" value="1"/>
</dbReference>
<dbReference type="InterPro" id="IPR004843">
    <property type="entry name" value="Calcineurin-like_PHP_ApaH"/>
</dbReference>
<dbReference type="InterPro" id="IPR050535">
    <property type="entry name" value="DNA_Repair-Maintenance_Comp"/>
</dbReference>
<dbReference type="InterPro" id="IPR029052">
    <property type="entry name" value="Metallo-depent_PP-like"/>
</dbReference>
<dbReference type="PANTHER" id="PTHR30337">
    <property type="entry name" value="COMPONENT OF ATP-DEPENDENT DSDNA EXONUCLEASE"/>
    <property type="match status" value="1"/>
</dbReference>
<dbReference type="Pfam" id="PF00149">
    <property type="entry name" value="Metallophos"/>
    <property type="match status" value="1"/>
</dbReference>
<dbReference type="SUPFAM" id="SSF56300">
    <property type="entry name" value="Metallo-dependent phosphatases"/>
    <property type="match status" value="1"/>
</dbReference>
<organismHost>
    <name type="scientific">Escherichia coli</name>
    <dbReference type="NCBI Taxonomy" id="562"/>
</organismHost>
<proteinExistence type="evidence at protein level"/>
<reference key="1">
    <citation type="journal article" date="1985" name="EMBO J.">
        <title>Genes 55, alpha gt, 47 and 46 of bacteriophage T4: the genomic organization as deduced by sequence analysis.</title>
        <authorList>
            <person name="Gram H."/>
            <person name="Rueger W."/>
        </authorList>
    </citation>
    <scope>NUCLEOTIDE SEQUENCE [GENOMIC DNA]</scope>
</reference>
<reference key="2">
    <citation type="journal article" date="2003" name="Microbiol. Mol. Biol. Rev.">
        <title>Bacteriophage T4 genome.</title>
        <authorList>
            <person name="Miller E.S."/>
            <person name="Kutter E."/>
            <person name="Mosig G."/>
            <person name="Arisaka F."/>
            <person name="Kunisawa T."/>
            <person name="Ruger W."/>
        </authorList>
    </citation>
    <scope>NUCLEOTIDE SEQUENCE [LARGE SCALE GENOMIC DNA]</scope>
</reference>
<reference key="3">
    <citation type="journal article" date="1968" name="J. Mol. Biol.">
        <title>Degradation of cytosin-containing bacterial and bacteriophage DNA after infection of Escherichia coli B with bacteriophage T4D wild type and with mutants defective in genes 46, 47 and 56.</title>
        <authorList>
            <person name="Kutter E.M."/>
            <person name="Wiberg J.S."/>
        </authorList>
    </citation>
    <scope>FUNCTION IN HOST DNA DEGRADATION</scope>
</reference>
<reference key="4">
    <citation type="journal article" date="1969" name="J. Virol.">
        <title>Variations in genetic recombination due to amber mutations in T4D bacteriophage.</title>
        <authorList>
            <person name="Berger H."/>
            <person name="Warren A.J."/>
            <person name="Fry K.E."/>
        </authorList>
    </citation>
    <scope>FUNCTION IN DNA RECOMBINATION</scope>
</reference>
<reference key="5">
    <citation type="journal article" date="1981" name="J. Virol.">
        <title>Membrane-associated DNase activity controlled by genes 46 and 47 of bacteriophage T4D and elevated DNase activity associated with the T4 das mutation.</title>
        <authorList>
            <person name="Mickelson C."/>
            <person name="Wiberg J.S."/>
        </authorList>
    </citation>
    <scope>FUNCTION</scope>
</reference>
<sequence>MKILNLGDWHLGVKADDEWIRGIQIDGIKQAIEYSKKNGITTWIQYGDIFDVRKAITHKTMEFAREIVQTLDDAGITLHTIVGNHDLHYKNVMHPNASTELLAKYPNVKVYDKPTTVDFDGCLIDLIPWMCEENTGEILEHIKTSSASFCVGHWELNGFYFYKGMKSHGLEPDFLKTYKEVWSGHFHTISEAANVRYIGTPWTLTAGDENDPRGFWMFDTETERTEFIPNNTTWHRRIHYPFKGKIDYKDFTNLSVRVIVTEVDKNLTKFESELEKVVHSLRVVSKIDNSVESDDSEEVEVQSLQTLMEEYINAIPDITDSDREALIQYANQLYVEATQ</sequence>
<keyword id="KW-1261">Bacterial host gene expression shutoff by virus</keyword>
<keyword id="KW-1247">Degradation of host chromosome by virus</keyword>
<keyword id="KW-0227">DNA damage</keyword>
<keyword id="KW-0234">DNA repair</keyword>
<keyword id="KW-0238">DNA-binding</keyword>
<keyword id="KW-0269">Exonuclease</keyword>
<keyword id="KW-1190">Host gene expression shutoff by virus</keyword>
<keyword id="KW-0945">Host-virus interaction</keyword>
<keyword id="KW-0378">Hydrolase</keyword>
<keyword id="KW-0540">Nuclease</keyword>
<keyword id="KW-1185">Reference proteome</keyword>
<name>EXO1_BPT4</name>
<accession>P04521</accession>
<organism>
    <name type="scientific">Enterobacteria phage T4</name>
    <name type="common">Bacteriophage T4</name>
    <dbReference type="NCBI Taxonomy" id="10665"/>
    <lineage>
        <taxon>Viruses</taxon>
        <taxon>Duplodnaviria</taxon>
        <taxon>Heunggongvirae</taxon>
        <taxon>Uroviricota</taxon>
        <taxon>Caudoviricetes</taxon>
        <taxon>Straboviridae</taxon>
        <taxon>Tevenvirinae</taxon>
        <taxon>Tequatrovirus</taxon>
    </lineage>
</organism>